<reference key="1">
    <citation type="journal article" date="1997" name="Mamm. Genome">
        <title>The structure of DXF34, a human X-linked sequence family with homology to a transcribed mouse Y-linked repeat.</title>
        <authorList>
            <person name="Laval S.H."/>
            <person name="Reed V."/>
            <person name="Blair H.J."/>
            <person name="Boyd Y."/>
        </authorList>
    </citation>
    <scope>NUCLEOTIDE SEQUENCE [MRNA]</scope>
    <source>
        <tissue>Fetal brain</tissue>
    </source>
</reference>
<reference key="2">
    <citation type="journal article" date="2005" name="Nature">
        <title>The DNA sequence of the human X chromosome.</title>
        <authorList>
            <person name="Ross M.T."/>
            <person name="Grafham D.V."/>
            <person name="Coffey A.J."/>
            <person name="Scherer S."/>
            <person name="McLay K."/>
            <person name="Muzny D."/>
            <person name="Platzer M."/>
            <person name="Howell G.R."/>
            <person name="Burrows C."/>
            <person name="Bird C.P."/>
            <person name="Frankish A."/>
            <person name="Lovell F.L."/>
            <person name="Howe K.L."/>
            <person name="Ashurst J.L."/>
            <person name="Fulton R.S."/>
            <person name="Sudbrak R."/>
            <person name="Wen G."/>
            <person name="Jones M.C."/>
            <person name="Hurles M.E."/>
            <person name="Andrews T.D."/>
            <person name="Scott C.E."/>
            <person name="Searle S."/>
            <person name="Ramser J."/>
            <person name="Whittaker A."/>
            <person name="Deadman R."/>
            <person name="Carter N.P."/>
            <person name="Hunt S.E."/>
            <person name="Chen R."/>
            <person name="Cree A."/>
            <person name="Gunaratne P."/>
            <person name="Havlak P."/>
            <person name="Hodgson A."/>
            <person name="Metzker M.L."/>
            <person name="Richards S."/>
            <person name="Scott G."/>
            <person name="Steffen D."/>
            <person name="Sodergren E."/>
            <person name="Wheeler D.A."/>
            <person name="Worley K.C."/>
            <person name="Ainscough R."/>
            <person name="Ambrose K.D."/>
            <person name="Ansari-Lari M.A."/>
            <person name="Aradhya S."/>
            <person name="Ashwell R.I."/>
            <person name="Babbage A.K."/>
            <person name="Bagguley C.L."/>
            <person name="Ballabio A."/>
            <person name="Banerjee R."/>
            <person name="Barker G.E."/>
            <person name="Barlow K.F."/>
            <person name="Barrett I.P."/>
            <person name="Bates K.N."/>
            <person name="Beare D.M."/>
            <person name="Beasley H."/>
            <person name="Beasley O."/>
            <person name="Beck A."/>
            <person name="Bethel G."/>
            <person name="Blechschmidt K."/>
            <person name="Brady N."/>
            <person name="Bray-Allen S."/>
            <person name="Bridgeman A.M."/>
            <person name="Brown A.J."/>
            <person name="Brown M.J."/>
            <person name="Bonnin D."/>
            <person name="Bruford E.A."/>
            <person name="Buhay C."/>
            <person name="Burch P."/>
            <person name="Burford D."/>
            <person name="Burgess J."/>
            <person name="Burrill W."/>
            <person name="Burton J."/>
            <person name="Bye J.M."/>
            <person name="Carder C."/>
            <person name="Carrel L."/>
            <person name="Chako J."/>
            <person name="Chapman J.C."/>
            <person name="Chavez D."/>
            <person name="Chen E."/>
            <person name="Chen G."/>
            <person name="Chen Y."/>
            <person name="Chen Z."/>
            <person name="Chinault C."/>
            <person name="Ciccodicola A."/>
            <person name="Clark S.Y."/>
            <person name="Clarke G."/>
            <person name="Clee C.M."/>
            <person name="Clegg S."/>
            <person name="Clerc-Blankenburg K."/>
            <person name="Clifford K."/>
            <person name="Cobley V."/>
            <person name="Cole C.G."/>
            <person name="Conquer J.S."/>
            <person name="Corby N."/>
            <person name="Connor R.E."/>
            <person name="David R."/>
            <person name="Davies J."/>
            <person name="Davis C."/>
            <person name="Davis J."/>
            <person name="Delgado O."/>
            <person name="Deshazo D."/>
            <person name="Dhami P."/>
            <person name="Ding Y."/>
            <person name="Dinh H."/>
            <person name="Dodsworth S."/>
            <person name="Draper H."/>
            <person name="Dugan-Rocha S."/>
            <person name="Dunham A."/>
            <person name="Dunn M."/>
            <person name="Durbin K.J."/>
            <person name="Dutta I."/>
            <person name="Eades T."/>
            <person name="Ellwood M."/>
            <person name="Emery-Cohen A."/>
            <person name="Errington H."/>
            <person name="Evans K.L."/>
            <person name="Faulkner L."/>
            <person name="Francis F."/>
            <person name="Frankland J."/>
            <person name="Fraser A.E."/>
            <person name="Galgoczy P."/>
            <person name="Gilbert J."/>
            <person name="Gill R."/>
            <person name="Gloeckner G."/>
            <person name="Gregory S.G."/>
            <person name="Gribble S."/>
            <person name="Griffiths C."/>
            <person name="Grocock R."/>
            <person name="Gu Y."/>
            <person name="Gwilliam R."/>
            <person name="Hamilton C."/>
            <person name="Hart E.A."/>
            <person name="Hawes A."/>
            <person name="Heath P.D."/>
            <person name="Heitmann K."/>
            <person name="Hennig S."/>
            <person name="Hernandez J."/>
            <person name="Hinzmann B."/>
            <person name="Ho S."/>
            <person name="Hoffs M."/>
            <person name="Howden P.J."/>
            <person name="Huckle E.J."/>
            <person name="Hume J."/>
            <person name="Hunt P.J."/>
            <person name="Hunt A.R."/>
            <person name="Isherwood J."/>
            <person name="Jacob L."/>
            <person name="Johnson D."/>
            <person name="Jones S."/>
            <person name="de Jong P.J."/>
            <person name="Joseph S.S."/>
            <person name="Keenan S."/>
            <person name="Kelly S."/>
            <person name="Kershaw J.K."/>
            <person name="Khan Z."/>
            <person name="Kioschis P."/>
            <person name="Klages S."/>
            <person name="Knights A.J."/>
            <person name="Kosiura A."/>
            <person name="Kovar-Smith C."/>
            <person name="Laird G.K."/>
            <person name="Langford C."/>
            <person name="Lawlor S."/>
            <person name="Leversha M."/>
            <person name="Lewis L."/>
            <person name="Liu W."/>
            <person name="Lloyd C."/>
            <person name="Lloyd D.M."/>
            <person name="Loulseged H."/>
            <person name="Loveland J.E."/>
            <person name="Lovell J.D."/>
            <person name="Lozado R."/>
            <person name="Lu J."/>
            <person name="Lyne R."/>
            <person name="Ma J."/>
            <person name="Maheshwari M."/>
            <person name="Matthews L.H."/>
            <person name="McDowall J."/>
            <person name="McLaren S."/>
            <person name="McMurray A."/>
            <person name="Meidl P."/>
            <person name="Meitinger T."/>
            <person name="Milne S."/>
            <person name="Miner G."/>
            <person name="Mistry S.L."/>
            <person name="Morgan M."/>
            <person name="Morris S."/>
            <person name="Mueller I."/>
            <person name="Mullikin J.C."/>
            <person name="Nguyen N."/>
            <person name="Nordsiek G."/>
            <person name="Nyakatura G."/>
            <person name="O'dell C.N."/>
            <person name="Okwuonu G."/>
            <person name="Palmer S."/>
            <person name="Pandian R."/>
            <person name="Parker D."/>
            <person name="Parrish J."/>
            <person name="Pasternak S."/>
            <person name="Patel D."/>
            <person name="Pearce A.V."/>
            <person name="Pearson D.M."/>
            <person name="Pelan S.E."/>
            <person name="Perez L."/>
            <person name="Porter K.M."/>
            <person name="Ramsey Y."/>
            <person name="Reichwald K."/>
            <person name="Rhodes S."/>
            <person name="Ridler K.A."/>
            <person name="Schlessinger D."/>
            <person name="Schueler M.G."/>
            <person name="Sehra H.K."/>
            <person name="Shaw-Smith C."/>
            <person name="Shen H."/>
            <person name="Sheridan E.M."/>
            <person name="Shownkeen R."/>
            <person name="Skuce C.D."/>
            <person name="Smith M.L."/>
            <person name="Sotheran E.C."/>
            <person name="Steingruber H.E."/>
            <person name="Steward C.A."/>
            <person name="Storey R."/>
            <person name="Swann R.M."/>
            <person name="Swarbreck D."/>
            <person name="Tabor P.E."/>
            <person name="Taudien S."/>
            <person name="Taylor T."/>
            <person name="Teague B."/>
            <person name="Thomas K."/>
            <person name="Thorpe A."/>
            <person name="Timms K."/>
            <person name="Tracey A."/>
            <person name="Trevanion S."/>
            <person name="Tromans A.C."/>
            <person name="d'Urso M."/>
            <person name="Verduzco D."/>
            <person name="Villasana D."/>
            <person name="Waldron L."/>
            <person name="Wall M."/>
            <person name="Wang Q."/>
            <person name="Warren J."/>
            <person name="Warry G.L."/>
            <person name="Wei X."/>
            <person name="West A."/>
            <person name="Whitehead S.L."/>
            <person name="Whiteley M.N."/>
            <person name="Wilkinson J.E."/>
            <person name="Willey D.L."/>
            <person name="Williams G."/>
            <person name="Williams L."/>
            <person name="Williamson A."/>
            <person name="Williamson H."/>
            <person name="Wilming L."/>
            <person name="Woodmansey R.L."/>
            <person name="Wray P.W."/>
            <person name="Yen J."/>
            <person name="Zhang J."/>
            <person name="Zhou J."/>
            <person name="Zoghbi H."/>
            <person name="Zorilla S."/>
            <person name="Buck D."/>
            <person name="Reinhardt R."/>
            <person name="Poustka A."/>
            <person name="Rosenthal A."/>
            <person name="Lehrach H."/>
            <person name="Meindl A."/>
            <person name="Minx P.J."/>
            <person name="Hillier L.W."/>
            <person name="Willard H.F."/>
            <person name="Wilson R.K."/>
            <person name="Waterston R.H."/>
            <person name="Rice C.M."/>
            <person name="Vaudin M."/>
            <person name="Coulson A."/>
            <person name="Nelson D.L."/>
            <person name="Weinstock G."/>
            <person name="Sulston J.E."/>
            <person name="Durbin R.M."/>
            <person name="Hubbard T."/>
            <person name="Gibbs R.A."/>
            <person name="Beck S."/>
            <person name="Rogers J."/>
            <person name="Bentley D.R."/>
        </authorList>
    </citation>
    <scope>NUCLEOTIDE SEQUENCE [LARGE SCALE GENOMIC DNA]</scope>
</reference>
<reference key="3">
    <citation type="journal article" date="2004" name="Genome Res.">
        <title>The status, quality, and expansion of the NIH full-length cDNA project: the Mammalian Gene Collection (MGC).</title>
        <authorList>
            <consortium name="The MGC Project Team"/>
        </authorList>
    </citation>
    <scope>NUCLEOTIDE SEQUENCE [LARGE SCALE MRNA]</scope>
    <source>
        <tissue>Lung</tissue>
    </source>
</reference>
<reference key="4">
    <citation type="submission" date="2008-03" db="UniProtKB">
        <authorList>
            <person name="Bienvenut W.V."/>
            <person name="Calvo F."/>
            <person name="Kolch W."/>
        </authorList>
    </citation>
    <scope>PROTEIN SEQUENCE OF 70-86 AND 114-131</scope>
    <scope>IDENTIFICATION BY MASS SPECTROMETRY</scope>
    <source>
        <tissue>Cervix carcinoma</tissue>
    </source>
</reference>
<reference key="5">
    <citation type="journal article" date="2017" name="J. Biol. Chem.">
        <title>A transcriptional coregulator, SPIN-DOC, attenuates the coactivator activity of Spindlin1.</title>
        <authorList>
            <person name="Bae N."/>
            <person name="Gao M."/>
            <person name="Li X."/>
            <person name="Premkumar T."/>
            <person name="Sbardella G."/>
            <person name="Chen J."/>
            <person name="Bedford M.T."/>
        </authorList>
    </citation>
    <scope>FUNCTION</scope>
    <scope>INTERACTION WITH C11ORF84/SPINDOC</scope>
</reference>
<accession>Q99865</accession>
<accession>O75650</accession>
<accession>Q6IPW2</accession>
<accession>Q9UJJ0</accession>
<proteinExistence type="evidence at protein level"/>
<keyword id="KW-0131">Cell cycle</keyword>
<keyword id="KW-0903">Direct protein sequencing</keyword>
<keyword id="KW-0539">Nucleus</keyword>
<keyword id="KW-1185">Reference proteome</keyword>
<comment type="function">
    <text evidence="1 5">May be involved in the regulation of cell cycle progression (By similarity). Exhibits H3K4me3-binding activity (PubMed:29061846).</text>
</comment>
<comment type="subunit">
    <text evidence="5">Interacts with C11orf84/SPINDOC (PubMed:29061846).</text>
</comment>
<comment type="subcellular location">
    <subcellularLocation>
        <location evidence="1">Nucleus</location>
    </subcellularLocation>
</comment>
<comment type="similarity">
    <text evidence="6">Belongs to the SPIN/STSY family.</text>
</comment>
<comment type="sequence caution" evidence="6">
    <conflict type="frameshift">
        <sequence resource="EMBL-CDS" id="CAA70988"/>
    </conflict>
</comment>
<name>SPI2A_HUMAN</name>
<protein>
    <recommendedName>
        <fullName>Spindlin-2A</fullName>
    </recommendedName>
    <alternativeName>
        <fullName>Protein DXF34</fullName>
    </alternativeName>
    <alternativeName>
        <fullName>Spindlin-like protein 2A</fullName>
        <shortName>SPIN-2</shortName>
        <shortName>SPIN-2A</shortName>
    </alternativeName>
</protein>
<feature type="chain" id="PRO_0000181371" description="Spindlin-2A">
    <location>
        <begin position="1"/>
        <end position="258"/>
    </location>
</feature>
<feature type="region of interest" description="Disordered" evidence="4">
    <location>
        <begin position="1"/>
        <end position="49"/>
    </location>
</feature>
<feature type="region of interest" description="Tudor-like domain 1" evidence="3">
    <location>
        <begin position="50"/>
        <end position="99"/>
    </location>
</feature>
<feature type="region of interest" description="Tudor-like domain 2" evidence="3">
    <location>
        <begin position="129"/>
        <end position="178"/>
    </location>
</feature>
<feature type="region of interest" description="Histone H3K4me3 and H3R8me2a binding" evidence="2">
    <location>
        <position position="138"/>
    </location>
</feature>
<feature type="region of interest" description="Tudor-like domain 3" evidence="3">
    <location>
        <begin position="210"/>
        <end position="255"/>
    </location>
</feature>
<feature type="region of interest" description="Histone H3K4me3 and H3R8me2a binding" evidence="2">
    <location>
        <begin position="246"/>
        <end position="248"/>
    </location>
</feature>
<feature type="compositionally biased region" description="Low complexity" evidence="4">
    <location>
        <begin position="1"/>
        <end position="23"/>
    </location>
</feature>
<feature type="compositionally biased region" description="Basic residues" evidence="4">
    <location>
        <begin position="28"/>
        <end position="39"/>
    </location>
</feature>
<feature type="site" description="Histone H3K4me3 and H3R8me2a binding" evidence="2">
    <location>
        <position position="169"/>
    </location>
</feature>
<feature type="site" description="Histone H3K4me3 and H3R8me2a binding" evidence="2">
    <location>
        <position position="176"/>
    </location>
</feature>
<feature type="site" description="Histone H3K4me3 and H3R8me2a binding" evidence="2">
    <location>
        <position position="180"/>
    </location>
</feature>
<feature type="sequence conflict" description="In Ref. 1; CAA70988 and 3; AAH71694." evidence="6" ref="1 3">
    <original>R</original>
    <variation>C</variation>
    <location>
        <position position="46"/>
    </location>
</feature>
<gene>
    <name type="primary">SPIN2A</name>
    <name type="synonym">DXF34</name>
    <name type="synonym">SPIN2</name>
</gene>
<dbReference type="EMBL" id="Y09858">
    <property type="protein sequence ID" value="CAA70988.1"/>
    <property type="status" value="ALT_FRAME"/>
    <property type="molecule type" value="mRNA"/>
</dbReference>
<dbReference type="EMBL" id="AL022157">
    <property type="status" value="NOT_ANNOTATED_CDS"/>
    <property type="molecule type" value="Genomic_DNA"/>
</dbReference>
<dbReference type="EMBL" id="BC071694">
    <property type="protein sequence ID" value="AAH71694.1"/>
    <property type="molecule type" value="mRNA"/>
</dbReference>
<dbReference type="CCDS" id="CCDS35312.1"/>
<dbReference type="RefSeq" id="NP_061876.3">
    <property type="nucleotide sequence ID" value="NM_019003.5"/>
</dbReference>
<dbReference type="RefSeq" id="XP_005262073.3">
    <property type="nucleotide sequence ID" value="XM_005262016.5"/>
</dbReference>
<dbReference type="RefSeq" id="XP_005262074.3">
    <property type="nucleotide sequence ID" value="XM_005262017.5"/>
</dbReference>
<dbReference type="RefSeq" id="XP_005262076.1">
    <property type="nucleotide sequence ID" value="XM_005262019.4"/>
</dbReference>
<dbReference type="RefSeq" id="XP_016885087.1">
    <property type="nucleotide sequence ID" value="XM_017029598.2"/>
</dbReference>
<dbReference type="SMR" id="Q99865"/>
<dbReference type="BioGRID" id="119972">
    <property type="interactions" value="22"/>
</dbReference>
<dbReference type="FunCoup" id="Q99865">
    <property type="interactions" value="53"/>
</dbReference>
<dbReference type="IntAct" id="Q99865">
    <property type="interactions" value="7"/>
</dbReference>
<dbReference type="MINT" id="Q99865"/>
<dbReference type="STRING" id="9606.ENSP00000364043"/>
<dbReference type="GlyGen" id="Q99865">
    <property type="glycosylation" value="1 site, 1 O-linked glycan (1 site)"/>
</dbReference>
<dbReference type="iPTMnet" id="Q99865"/>
<dbReference type="PhosphoSitePlus" id="Q99865"/>
<dbReference type="BioMuta" id="SPIN2A"/>
<dbReference type="DMDM" id="116242797"/>
<dbReference type="jPOST" id="Q99865"/>
<dbReference type="MassIVE" id="Q99865"/>
<dbReference type="PaxDb" id="9606-ENSP00000364043"/>
<dbReference type="PeptideAtlas" id="Q99865"/>
<dbReference type="Pumba" id="Q99865"/>
<dbReference type="Antibodypedia" id="55479">
    <property type="antibodies" value="50 antibodies from 16 providers"/>
</dbReference>
<dbReference type="DNASU" id="54466"/>
<dbReference type="Ensembl" id="ENST00000374906.4">
    <property type="protein sequence ID" value="ENSP00000364041.3"/>
    <property type="gene ID" value="ENSG00000147059.9"/>
</dbReference>
<dbReference type="Ensembl" id="ENST00000374908.1">
    <property type="protein sequence ID" value="ENSP00000364043.1"/>
    <property type="gene ID" value="ENSG00000147059.9"/>
</dbReference>
<dbReference type="GeneID" id="54466"/>
<dbReference type="KEGG" id="hsa:54466"/>
<dbReference type="MANE-Select" id="ENST00000374906.4">
    <property type="protein sequence ID" value="ENSP00000364041.3"/>
    <property type="RefSeq nucleotide sequence ID" value="NM_019003.5"/>
    <property type="RefSeq protein sequence ID" value="NP_061876.3"/>
</dbReference>
<dbReference type="UCSC" id="uc004dvb.3">
    <property type="organism name" value="human"/>
</dbReference>
<dbReference type="AGR" id="HGNC:20694"/>
<dbReference type="CTD" id="54466"/>
<dbReference type="DisGeNET" id="54466"/>
<dbReference type="GeneCards" id="SPIN2A"/>
<dbReference type="HGNC" id="HGNC:20694">
    <property type="gene designation" value="SPIN2A"/>
</dbReference>
<dbReference type="HPA" id="ENSG00000147059">
    <property type="expression patterns" value="Low tissue specificity"/>
</dbReference>
<dbReference type="MIM" id="300621">
    <property type="type" value="gene"/>
</dbReference>
<dbReference type="neXtProt" id="NX_Q99865"/>
<dbReference type="OpenTargets" id="ENSG00000147059"/>
<dbReference type="PharmGKB" id="PA144596490"/>
<dbReference type="VEuPathDB" id="HostDB:ENSG00000147059"/>
<dbReference type="eggNOG" id="ENOG502QRYD">
    <property type="taxonomic scope" value="Eukaryota"/>
</dbReference>
<dbReference type="GeneTree" id="ENSGT00950000182925"/>
<dbReference type="HOGENOM" id="CLU_068595_0_0_1"/>
<dbReference type="InParanoid" id="Q99865"/>
<dbReference type="OMA" id="IWAPEAR"/>
<dbReference type="OrthoDB" id="9522941at2759"/>
<dbReference type="PAN-GO" id="Q99865">
    <property type="GO annotations" value="4 GO annotations based on evolutionary models"/>
</dbReference>
<dbReference type="PhylomeDB" id="Q99865"/>
<dbReference type="TreeFam" id="TF332665"/>
<dbReference type="PathwayCommons" id="Q99865"/>
<dbReference type="SignaLink" id="Q99865"/>
<dbReference type="BioGRID-ORCS" id="54466">
    <property type="hits" value="31 hits in 651 CRISPR screens"/>
</dbReference>
<dbReference type="GenomeRNAi" id="54466"/>
<dbReference type="Pharos" id="Q99865">
    <property type="development level" value="Tdark"/>
</dbReference>
<dbReference type="PRO" id="PR:Q99865"/>
<dbReference type="Proteomes" id="UP000005640">
    <property type="component" value="Chromosome X"/>
</dbReference>
<dbReference type="RNAct" id="Q99865">
    <property type="molecule type" value="protein"/>
</dbReference>
<dbReference type="Bgee" id="ENSG00000147059">
    <property type="expression patterns" value="Expressed in male germ line stem cell (sensu Vertebrata) in testis and 96 other cell types or tissues"/>
</dbReference>
<dbReference type="ExpressionAtlas" id="Q99865">
    <property type="expression patterns" value="baseline and differential"/>
</dbReference>
<dbReference type="GO" id="GO:0005829">
    <property type="term" value="C:cytosol"/>
    <property type="evidence" value="ECO:0000314"/>
    <property type="project" value="HPA"/>
</dbReference>
<dbReference type="GO" id="GO:0005654">
    <property type="term" value="C:nucleoplasm"/>
    <property type="evidence" value="ECO:0000314"/>
    <property type="project" value="HPA"/>
</dbReference>
<dbReference type="GO" id="GO:0140002">
    <property type="term" value="F:histone H3K4me3 reader activity"/>
    <property type="evidence" value="ECO:0000314"/>
    <property type="project" value="UniProtKB"/>
</dbReference>
<dbReference type="GO" id="GO:0035064">
    <property type="term" value="F:methylated histone binding"/>
    <property type="evidence" value="ECO:0000318"/>
    <property type="project" value="GO_Central"/>
</dbReference>
<dbReference type="GO" id="GO:0007276">
    <property type="term" value="P:gamete generation"/>
    <property type="evidence" value="ECO:0007669"/>
    <property type="project" value="InterPro"/>
</dbReference>
<dbReference type="GO" id="GO:0006355">
    <property type="term" value="P:regulation of DNA-templated transcription"/>
    <property type="evidence" value="ECO:0000318"/>
    <property type="project" value="GO_Central"/>
</dbReference>
<dbReference type="FunFam" id="2.80.10.70:FF:000001">
    <property type="entry name" value="Spindlin 1"/>
    <property type="match status" value="1"/>
</dbReference>
<dbReference type="Gene3D" id="2.80.10.70">
    <property type="entry name" value="Spindlin/Ssty"/>
    <property type="match status" value="1"/>
</dbReference>
<dbReference type="InterPro" id="IPR003671">
    <property type="entry name" value="SPIN/Ssty"/>
</dbReference>
<dbReference type="InterPro" id="IPR042567">
    <property type="entry name" value="SPIN/Ssty_sf"/>
</dbReference>
<dbReference type="PANTHER" id="PTHR10405">
    <property type="entry name" value="SPINDLIN"/>
    <property type="match status" value="1"/>
</dbReference>
<dbReference type="Pfam" id="PF02513">
    <property type="entry name" value="Spin-Ssty"/>
    <property type="match status" value="3"/>
</dbReference>
<evidence type="ECO:0000250" key="1">
    <source>
        <dbReference type="UniProtKB" id="Q9BPZ2"/>
    </source>
</evidence>
<evidence type="ECO:0000250" key="2">
    <source>
        <dbReference type="UniProtKB" id="Q9Y657"/>
    </source>
</evidence>
<evidence type="ECO:0000255" key="3"/>
<evidence type="ECO:0000256" key="4">
    <source>
        <dbReference type="SAM" id="MobiDB-lite"/>
    </source>
</evidence>
<evidence type="ECO:0000269" key="5">
    <source>
    </source>
</evidence>
<evidence type="ECO:0000305" key="6"/>
<organism>
    <name type="scientific">Homo sapiens</name>
    <name type="common">Human</name>
    <dbReference type="NCBI Taxonomy" id="9606"/>
    <lineage>
        <taxon>Eukaryota</taxon>
        <taxon>Metazoa</taxon>
        <taxon>Chordata</taxon>
        <taxon>Craniata</taxon>
        <taxon>Vertebrata</taxon>
        <taxon>Euteleostomi</taxon>
        <taxon>Mammalia</taxon>
        <taxon>Eutheria</taxon>
        <taxon>Euarchontoglires</taxon>
        <taxon>Primates</taxon>
        <taxon>Haplorrhini</taxon>
        <taxon>Catarrhini</taxon>
        <taxon>Hominidae</taxon>
        <taxon>Homo</taxon>
    </lineage>
</organism>
<sequence length="258" mass="29188">MKTPNAQEAEGQQTRAAAGRATGSANMTKKKVSQKKQRGRPSSQPRRNIVGCRISHGWKEGDEPITQWKGTVLDQVPINPSLYLVKYDGIDCVYGLELHRDERVLSLKILSDRVASSHISDANLANTIIGKAVEHMFEGEHGSKDEWRGMVLAQAPIMKAWFYITYEKDPVLYMYQLLDDYKEGDLRIMPESSESPPTEREPGGVVDGLIGKHVEYTKEDGSKRIGMVIHQVETKPSVYFIKFDDDFHIYVYDLVKKS</sequence>